<protein>
    <recommendedName>
        <fullName evidence="1">NADH-ubiquinone oxidoreductase chain 2</fullName>
        <ecNumber evidence="1">7.1.1.2</ecNumber>
    </recommendedName>
    <alternativeName>
        <fullName>NADH dehydrogenase subunit 2</fullName>
    </alternativeName>
</protein>
<sequence length="348" mass="38912">MNPLAQLIIYTTVITGTLITMLSSHWFLAWAGLEMNMLAFIPTLIKKTNARSTEAATKYFLAQSTASMILMMAIISNNLLSGHWTTTTNYTNQFPPLAMTIALTMKLGMAPFHFWVPEVTQGTPLTSGLLLLTWQKLAPISIMYQIHPSINTHILLILSTLSIAVGSWGGLNQTQLRKILGYSSITHTGWMMMTLTYNPTITTLYLITYITLTTTMFLTLNLNSSTTTLTLSNTWNKSTHLMPLMTSTLLSLGGLPPLTGFLPKWVTIQELTMNNNFIIPTIMITMTLLNLYFYMRLIYTISLTLLPTSNNTKMTWQFENTKPTLFIPALITISTLLLPISPLILSIP</sequence>
<gene>
    <name evidence="1" type="primary">MT-ND2</name>
    <name type="synonym">MTND2</name>
    <name type="synonym">NADH2</name>
    <name type="synonym">ND2</name>
</gene>
<organism>
    <name type="scientific">Papio hamadryas</name>
    <name type="common">Hamadryas baboon</name>
    <dbReference type="NCBI Taxonomy" id="9557"/>
    <lineage>
        <taxon>Eukaryota</taxon>
        <taxon>Metazoa</taxon>
        <taxon>Chordata</taxon>
        <taxon>Craniata</taxon>
        <taxon>Vertebrata</taxon>
        <taxon>Euteleostomi</taxon>
        <taxon>Mammalia</taxon>
        <taxon>Eutheria</taxon>
        <taxon>Euarchontoglires</taxon>
        <taxon>Primates</taxon>
        <taxon>Haplorrhini</taxon>
        <taxon>Catarrhini</taxon>
        <taxon>Cercopithecidae</taxon>
        <taxon>Cercopithecinae</taxon>
        <taxon>Papio</taxon>
    </lineage>
</organism>
<reference key="1">
    <citation type="journal article" date="1998" name="J. Mol. Evol.">
        <title>Molecular timing of primate divergences as estimated by two nonprimate calibration points.</title>
        <authorList>
            <person name="Arnason U."/>
            <person name="Gullberg A."/>
            <person name="Janke A."/>
        </authorList>
    </citation>
    <scope>NUCLEOTIDE SEQUENCE [GENOMIC DNA]</scope>
</reference>
<name>NU2M_PAPHA</name>
<evidence type="ECO:0000250" key="1">
    <source>
        <dbReference type="UniProtKB" id="P03891"/>
    </source>
</evidence>
<evidence type="ECO:0000250" key="2">
    <source>
        <dbReference type="UniProtKB" id="P03892"/>
    </source>
</evidence>
<evidence type="ECO:0000255" key="3"/>
<evidence type="ECO:0000305" key="4"/>
<keyword id="KW-0249">Electron transport</keyword>
<keyword id="KW-0472">Membrane</keyword>
<keyword id="KW-0496">Mitochondrion</keyword>
<keyword id="KW-0999">Mitochondrion inner membrane</keyword>
<keyword id="KW-0520">NAD</keyword>
<keyword id="KW-0679">Respiratory chain</keyword>
<keyword id="KW-1278">Translocase</keyword>
<keyword id="KW-0812">Transmembrane</keyword>
<keyword id="KW-1133">Transmembrane helix</keyword>
<keyword id="KW-0813">Transport</keyword>
<keyword id="KW-0830">Ubiquinone</keyword>
<geneLocation type="mitochondrion"/>
<comment type="function">
    <text evidence="1">Core subunit of the mitochondrial membrane respiratory chain NADH dehydrogenase (Complex I) which catalyzes electron transfer from NADH through the respiratory chain, using ubiquinone as an electron acceptor. Essential for the catalytic activity and assembly of complex I.</text>
</comment>
<comment type="catalytic activity">
    <reaction evidence="1">
        <text>a ubiquinone + NADH + 5 H(+)(in) = a ubiquinol + NAD(+) + 4 H(+)(out)</text>
        <dbReference type="Rhea" id="RHEA:29091"/>
        <dbReference type="Rhea" id="RHEA-COMP:9565"/>
        <dbReference type="Rhea" id="RHEA-COMP:9566"/>
        <dbReference type="ChEBI" id="CHEBI:15378"/>
        <dbReference type="ChEBI" id="CHEBI:16389"/>
        <dbReference type="ChEBI" id="CHEBI:17976"/>
        <dbReference type="ChEBI" id="CHEBI:57540"/>
        <dbReference type="ChEBI" id="CHEBI:57945"/>
        <dbReference type="EC" id="7.1.1.2"/>
    </reaction>
</comment>
<comment type="subunit">
    <text evidence="1 2">Core subunit of respiratory chain NADH dehydrogenase (Complex I) which is composed of 45 different subunits. Interacts with TMEM242 (By similarity).</text>
</comment>
<comment type="subcellular location">
    <subcellularLocation>
        <location evidence="2">Mitochondrion inner membrane</location>
        <topology evidence="3">Multi-pass membrane protein</topology>
    </subcellularLocation>
</comment>
<comment type="similarity">
    <text evidence="4">Belongs to the complex I subunit 2 family.</text>
</comment>
<dbReference type="EC" id="7.1.1.2" evidence="1"/>
<dbReference type="EMBL" id="Y18001">
    <property type="protein sequence ID" value="CAA76995.1"/>
    <property type="molecule type" value="Genomic_DNA"/>
</dbReference>
<dbReference type="PIR" id="T11507">
    <property type="entry name" value="T11507"/>
</dbReference>
<dbReference type="RefSeq" id="NP_008459.1">
    <property type="nucleotide sequence ID" value="NC_001992.1"/>
</dbReference>
<dbReference type="SMR" id="Q9ZXY3"/>
<dbReference type="GeneID" id="808329"/>
<dbReference type="CTD" id="4536"/>
<dbReference type="GO" id="GO:0005743">
    <property type="term" value="C:mitochondrial inner membrane"/>
    <property type="evidence" value="ECO:0000250"/>
    <property type="project" value="UniProtKB"/>
</dbReference>
<dbReference type="GO" id="GO:0008137">
    <property type="term" value="F:NADH dehydrogenase (ubiquinone) activity"/>
    <property type="evidence" value="ECO:0000250"/>
    <property type="project" value="UniProtKB"/>
</dbReference>
<dbReference type="GO" id="GO:0006120">
    <property type="term" value="P:mitochondrial electron transport, NADH to ubiquinone"/>
    <property type="evidence" value="ECO:0000250"/>
    <property type="project" value="UniProtKB"/>
</dbReference>
<dbReference type="GO" id="GO:0032981">
    <property type="term" value="P:mitochondrial respiratory chain complex I assembly"/>
    <property type="evidence" value="ECO:0000250"/>
    <property type="project" value="UniProtKB"/>
</dbReference>
<dbReference type="InterPro" id="IPR050175">
    <property type="entry name" value="Complex_I_Subunit_2"/>
</dbReference>
<dbReference type="InterPro" id="IPR010933">
    <property type="entry name" value="NADH_DH_su2_C"/>
</dbReference>
<dbReference type="InterPro" id="IPR003917">
    <property type="entry name" value="NADH_UbQ_OxRdtase_chain2"/>
</dbReference>
<dbReference type="InterPro" id="IPR001750">
    <property type="entry name" value="ND/Mrp_TM"/>
</dbReference>
<dbReference type="PANTHER" id="PTHR46552">
    <property type="entry name" value="NADH-UBIQUINONE OXIDOREDUCTASE CHAIN 2"/>
    <property type="match status" value="1"/>
</dbReference>
<dbReference type="PANTHER" id="PTHR46552:SF1">
    <property type="entry name" value="NADH-UBIQUINONE OXIDOREDUCTASE CHAIN 2"/>
    <property type="match status" value="1"/>
</dbReference>
<dbReference type="Pfam" id="PF06444">
    <property type="entry name" value="NADH_dehy_S2_C"/>
    <property type="match status" value="1"/>
</dbReference>
<dbReference type="Pfam" id="PF00361">
    <property type="entry name" value="Proton_antipo_M"/>
    <property type="match status" value="1"/>
</dbReference>
<dbReference type="PRINTS" id="PR01436">
    <property type="entry name" value="NADHDHGNASE2"/>
</dbReference>
<feature type="chain" id="PRO_0000117618" description="NADH-ubiquinone oxidoreductase chain 2">
    <location>
        <begin position="1"/>
        <end position="348"/>
    </location>
</feature>
<feature type="transmembrane region" description="Helical" evidence="3">
    <location>
        <begin position="13"/>
        <end position="33"/>
    </location>
</feature>
<feature type="transmembrane region" description="Helical" evidence="3">
    <location>
        <begin position="60"/>
        <end position="80"/>
    </location>
</feature>
<feature type="transmembrane region" description="Helical" evidence="3">
    <location>
        <begin position="96"/>
        <end position="116"/>
    </location>
</feature>
<feature type="transmembrane region" description="Helical" evidence="3">
    <location>
        <begin position="124"/>
        <end position="144"/>
    </location>
</feature>
<feature type="transmembrane region" description="Helical" evidence="3">
    <location>
        <begin position="150"/>
        <end position="170"/>
    </location>
</feature>
<feature type="transmembrane region" description="Helical" evidence="3">
    <location>
        <begin position="200"/>
        <end position="220"/>
    </location>
</feature>
<feature type="transmembrane region" description="Helical" evidence="3">
    <location>
        <begin position="241"/>
        <end position="261"/>
    </location>
</feature>
<feature type="transmembrane region" description="Helical" evidence="3">
    <location>
        <begin position="278"/>
        <end position="298"/>
    </location>
</feature>
<feature type="transmembrane region" description="Helical" evidence="3">
    <location>
        <begin position="325"/>
        <end position="345"/>
    </location>
</feature>
<proteinExistence type="inferred from homology"/>
<accession>Q9ZXY3</accession>